<organism>
    <name type="scientific">Streptococcus agalactiae serotype III (strain NEM316)</name>
    <dbReference type="NCBI Taxonomy" id="211110"/>
    <lineage>
        <taxon>Bacteria</taxon>
        <taxon>Bacillati</taxon>
        <taxon>Bacillota</taxon>
        <taxon>Bacilli</taxon>
        <taxon>Lactobacillales</taxon>
        <taxon>Streptococcaceae</taxon>
        <taxon>Streptococcus</taxon>
    </lineage>
</organism>
<protein>
    <recommendedName>
        <fullName evidence="1">Glutamate 5-kinase</fullName>
        <ecNumber evidence="1">2.7.2.11</ecNumber>
    </recommendedName>
    <alternativeName>
        <fullName evidence="1">Gamma-glutamyl kinase</fullName>
        <shortName evidence="1">GK</shortName>
    </alternativeName>
</protein>
<name>PROB_STRA3</name>
<accession>P65794</accession>
<accession>Q8E1S0</accession>
<accession>Q8E784</accession>
<dbReference type="EC" id="2.7.2.11" evidence="1"/>
<dbReference type="EMBL" id="AL766844">
    <property type="protein sequence ID" value="CAD45918.1"/>
    <property type="molecule type" value="Genomic_DNA"/>
</dbReference>
<dbReference type="RefSeq" id="WP_000820352.1">
    <property type="nucleotide sequence ID" value="NC_004368.1"/>
</dbReference>
<dbReference type="SMR" id="P65794"/>
<dbReference type="KEGG" id="san:proB"/>
<dbReference type="eggNOG" id="COG0263">
    <property type="taxonomic scope" value="Bacteria"/>
</dbReference>
<dbReference type="HOGENOM" id="CLU_025400_0_2_9"/>
<dbReference type="UniPathway" id="UPA00098">
    <property type="reaction ID" value="UER00359"/>
</dbReference>
<dbReference type="Proteomes" id="UP000000823">
    <property type="component" value="Chromosome"/>
</dbReference>
<dbReference type="GO" id="GO:0005829">
    <property type="term" value="C:cytosol"/>
    <property type="evidence" value="ECO:0007669"/>
    <property type="project" value="TreeGrafter"/>
</dbReference>
<dbReference type="GO" id="GO:0005524">
    <property type="term" value="F:ATP binding"/>
    <property type="evidence" value="ECO:0007669"/>
    <property type="project" value="UniProtKB-KW"/>
</dbReference>
<dbReference type="GO" id="GO:0004349">
    <property type="term" value="F:glutamate 5-kinase activity"/>
    <property type="evidence" value="ECO:0007669"/>
    <property type="project" value="UniProtKB-UniRule"/>
</dbReference>
<dbReference type="GO" id="GO:0055129">
    <property type="term" value="P:L-proline biosynthetic process"/>
    <property type="evidence" value="ECO:0007669"/>
    <property type="project" value="UniProtKB-UniRule"/>
</dbReference>
<dbReference type="CDD" id="cd04242">
    <property type="entry name" value="AAK_G5K_ProB"/>
    <property type="match status" value="1"/>
</dbReference>
<dbReference type="FunFam" id="3.40.1160.10:FF:000018">
    <property type="entry name" value="Glutamate 5-kinase"/>
    <property type="match status" value="1"/>
</dbReference>
<dbReference type="Gene3D" id="3.40.1160.10">
    <property type="entry name" value="Acetylglutamate kinase-like"/>
    <property type="match status" value="1"/>
</dbReference>
<dbReference type="HAMAP" id="MF_00456">
    <property type="entry name" value="ProB"/>
    <property type="match status" value="1"/>
</dbReference>
<dbReference type="InterPro" id="IPR036393">
    <property type="entry name" value="AceGlu_kinase-like_sf"/>
</dbReference>
<dbReference type="InterPro" id="IPR001048">
    <property type="entry name" value="Asp/Glu/Uridylate_kinase"/>
</dbReference>
<dbReference type="InterPro" id="IPR041739">
    <property type="entry name" value="G5K_ProB"/>
</dbReference>
<dbReference type="InterPro" id="IPR001057">
    <property type="entry name" value="Glu/AcGlu_kinase"/>
</dbReference>
<dbReference type="InterPro" id="IPR011529">
    <property type="entry name" value="Glu_5kinase"/>
</dbReference>
<dbReference type="InterPro" id="IPR005715">
    <property type="entry name" value="Glu_5kinase/COase_Synthase"/>
</dbReference>
<dbReference type="InterPro" id="IPR019797">
    <property type="entry name" value="Glutamate_5-kinase_CS"/>
</dbReference>
<dbReference type="NCBIfam" id="TIGR01027">
    <property type="entry name" value="proB"/>
    <property type="match status" value="1"/>
</dbReference>
<dbReference type="PANTHER" id="PTHR43654">
    <property type="entry name" value="GLUTAMATE 5-KINASE"/>
    <property type="match status" value="1"/>
</dbReference>
<dbReference type="PANTHER" id="PTHR43654:SF1">
    <property type="entry name" value="ISOPENTENYL PHOSPHATE KINASE"/>
    <property type="match status" value="1"/>
</dbReference>
<dbReference type="Pfam" id="PF00696">
    <property type="entry name" value="AA_kinase"/>
    <property type="match status" value="1"/>
</dbReference>
<dbReference type="PIRSF" id="PIRSF000729">
    <property type="entry name" value="GK"/>
    <property type="match status" value="1"/>
</dbReference>
<dbReference type="PRINTS" id="PR00474">
    <property type="entry name" value="GLU5KINASE"/>
</dbReference>
<dbReference type="SUPFAM" id="SSF53633">
    <property type="entry name" value="Carbamate kinase-like"/>
    <property type="match status" value="1"/>
</dbReference>
<dbReference type="PROSITE" id="PS00902">
    <property type="entry name" value="GLUTAMATE_5_KINASE"/>
    <property type="match status" value="1"/>
</dbReference>
<keyword id="KW-0028">Amino-acid biosynthesis</keyword>
<keyword id="KW-0067">ATP-binding</keyword>
<keyword id="KW-0963">Cytoplasm</keyword>
<keyword id="KW-0418">Kinase</keyword>
<keyword id="KW-0547">Nucleotide-binding</keyword>
<keyword id="KW-0641">Proline biosynthesis</keyword>
<keyword id="KW-0808">Transferase</keyword>
<proteinExistence type="inferred from homology"/>
<sequence length="267" mass="29198">MKRHFETTRRIVIKVGTSSLVQTSGKINLSKIDHLAFVISSLMNRGMEVILVSSGAMGFGLDILKMDKRPQEISQQQAVSSVGQVAMMSLYSQIFSHYQTHVSQILLTRDVVVFPESLQNVTNSFESLLSMGILPIVNENDAVSVDEMDHKTKFGDNDRLSAVVAKITKADLLIMLSDIDGLFDKNPNIYDDAVLRSHVSEITDDIIKSAGGAGSKFGTGGMLSKIKSAQMVFDNNGQMILMNGANPRDILKVLDGHNIGTYFAQGK</sequence>
<evidence type="ECO:0000255" key="1">
    <source>
        <dbReference type="HAMAP-Rule" id="MF_00456"/>
    </source>
</evidence>
<feature type="chain" id="PRO_0000109727" description="Glutamate 5-kinase">
    <location>
        <begin position="1"/>
        <end position="267"/>
    </location>
</feature>
<feature type="binding site" evidence="1">
    <location>
        <position position="14"/>
    </location>
    <ligand>
        <name>ATP</name>
        <dbReference type="ChEBI" id="CHEBI:30616"/>
    </ligand>
</feature>
<feature type="binding site" evidence="1">
    <location>
        <position position="54"/>
    </location>
    <ligand>
        <name>substrate</name>
    </ligand>
</feature>
<feature type="binding site" evidence="1">
    <location>
        <position position="141"/>
    </location>
    <ligand>
        <name>substrate</name>
    </ligand>
</feature>
<feature type="binding site" evidence="1">
    <location>
        <position position="157"/>
    </location>
    <ligand>
        <name>substrate</name>
    </ligand>
</feature>
<feature type="binding site" evidence="1">
    <location>
        <begin position="177"/>
        <end position="178"/>
    </location>
    <ligand>
        <name>ATP</name>
        <dbReference type="ChEBI" id="CHEBI:30616"/>
    </ligand>
</feature>
<feature type="binding site" evidence="1">
    <location>
        <begin position="219"/>
        <end position="225"/>
    </location>
    <ligand>
        <name>ATP</name>
        <dbReference type="ChEBI" id="CHEBI:30616"/>
    </ligand>
</feature>
<comment type="function">
    <text evidence="1">Catalyzes the transfer of a phosphate group to glutamate to form L-glutamate 5-phosphate.</text>
</comment>
<comment type="catalytic activity">
    <reaction evidence="1">
        <text>L-glutamate + ATP = L-glutamyl 5-phosphate + ADP</text>
        <dbReference type="Rhea" id="RHEA:14877"/>
        <dbReference type="ChEBI" id="CHEBI:29985"/>
        <dbReference type="ChEBI" id="CHEBI:30616"/>
        <dbReference type="ChEBI" id="CHEBI:58274"/>
        <dbReference type="ChEBI" id="CHEBI:456216"/>
        <dbReference type="EC" id="2.7.2.11"/>
    </reaction>
</comment>
<comment type="pathway">
    <text evidence="1">Amino-acid biosynthesis; L-proline biosynthesis; L-glutamate 5-semialdehyde from L-glutamate: step 1/2.</text>
</comment>
<comment type="subcellular location">
    <subcellularLocation>
        <location evidence="1">Cytoplasm</location>
    </subcellularLocation>
</comment>
<comment type="similarity">
    <text evidence="1">Belongs to the glutamate 5-kinase family.</text>
</comment>
<gene>
    <name evidence="1" type="primary">proB</name>
    <name type="ordered locus">gbs0273</name>
</gene>
<reference key="1">
    <citation type="journal article" date="2002" name="Mol. Microbiol.">
        <title>Genome sequence of Streptococcus agalactiae, a pathogen causing invasive neonatal disease.</title>
        <authorList>
            <person name="Glaser P."/>
            <person name="Rusniok C."/>
            <person name="Buchrieser C."/>
            <person name="Chevalier F."/>
            <person name="Frangeul L."/>
            <person name="Msadek T."/>
            <person name="Zouine M."/>
            <person name="Couve E."/>
            <person name="Lalioui L."/>
            <person name="Poyart C."/>
            <person name="Trieu-Cuot P."/>
            <person name="Kunst F."/>
        </authorList>
    </citation>
    <scope>NUCLEOTIDE SEQUENCE [LARGE SCALE GENOMIC DNA]</scope>
    <source>
        <strain>NEM316</strain>
    </source>
</reference>